<sequence length="306" mass="33571">MSTLGHQYDNSLVSNAFGFLRLPMNFQPYDSDADWVITGVPFDMATSGRAGGRHGPAAIRQVSTNLAWEHNRFPWNFDMRERLNVVDCGDLVYAFGDAREMSEKLQAHAEKLLAAGKRMLSFGGDHFVTLPLLRAHAKHFGKMALVHFDAHTDTYANGCEFDHGTMFYTAPKEGLIDPNHSVQIGIRTEFDKDNGFTVLDACQVNDRSVDDIIAQVKQIVGDMPVYLTFDIDCLDPAFAPGTGTPVIGGLTSDRAIKLVRGLKDLNIVGMDVVEVAPAYDQSEITALAAATLALEMLYIQAAKKGE</sequence>
<organism>
    <name type="scientific">Escherichia coli O127:H6 (strain E2348/69 / EPEC)</name>
    <dbReference type="NCBI Taxonomy" id="574521"/>
    <lineage>
        <taxon>Bacteria</taxon>
        <taxon>Pseudomonadati</taxon>
        <taxon>Pseudomonadota</taxon>
        <taxon>Gammaproteobacteria</taxon>
        <taxon>Enterobacterales</taxon>
        <taxon>Enterobacteriaceae</taxon>
        <taxon>Escherichia</taxon>
    </lineage>
</organism>
<name>SPEB_ECO27</name>
<feature type="chain" id="PRO_1000184846" description="Agmatinase">
    <location>
        <begin position="1"/>
        <end position="306"/>
    </location>
</feature>
<feature type="binding site" evidence="1">
    <location>
        <position position="126"/>
    </location>
    <ligand>
        <name>Mn(2+)</name>
        <dbReference type="ChEBI" id="CHEBI:29035"/>
    </ligand>
</feature>
<feature type="binding site" evidence="1">
    <location>
        <position position="149"/>
    </location>
    <ligand>
        <name>Mn(2+)</name>
        <dbReference type="ChEBI" id="CHEBI:29035"/>
    </ligand>
</feature>
<feature type="binding site" evidence="1">
    <location>
        <position position="151"/>
    </location>
    <ligand>
        <name>Mn(2+)</name>
        <dbReference type="ChEBI" id="CHEBI:29035"/>
    </ligand>
</feature>
<feature type="binding site" evidence="1">
    <location>
        <position position="153"/>
    </location>
    <ligand>
        <name>Mn(2+)</name>
        <dbReference type="ChEBI" id="CHEBI:29035"/>
    </ligand>
</feature>
<feature type="binding site" evidence="1">
    <location>
        <position position="230"/>
    </location>
    <ligand>
        <name>Mn(2+)</name>
        <dbReference type="ChEBI" id="CHEBI:29035"/>
    </ligand>
</feature>
<feature type="binding site" evidence="1">
    <location>
        <position position="232"/>
    </location>
    <ligand>
        <name>Mn(2+)</name>
        <dbReference type="ChEBI" id="CHEBI:29035"/>
    </ligand>
</feature>
<evidence type="ECO:0000255" key="1">
    <source>
        <dbReference type="HAMAP-Rule" id="MF_01418"/>
    </source>
</evidence>
<protein>
    <recommendedName>
        <fullName evidence="1">Agmatinase</fullName>
        <ecNumber evidence="1">3.5.3.11</ecNumber>
    </recommendedName>
    <alternativeName>
        <fullName evidence="1">Agmatine ureohydrolase</fullName>
        <shortName evidence="1">AUH</shortName>
    </alternativeName>
</protein>
<accession>B7UHY3</accession>
<gene>
    <name evidence="1" type="primary">speB</name>
    <name type="ordered locus">E2348C_3189</name>
</gene>
<proteinExistence type="inferred from homology"/>
<dbReference type="EC" id="3.5.3.11" evidence="1"/>
<dbReference type="EMBL" id="FM180568">
    <property type="protein sequence ID" value="CAS10737.1"/>
    <property type="molecule type" value="Genomic_DNA"/>
</dbReference>
<dbReference type="RefSeq" id="WP_000105562.1">
    <property type="nucleotide sequence ID" value="NC_011601.1"/>
</dbReference>
<dbReference type="SMR" id="B7UHY3"/>
<dbReference type="KEGG" id="ecg:E2348C_3189"/>
<dbReference type="HOGENOM" id="CLU_039478_0_0_6"/>
<dbReference type="UniPathway" id="UPA00534">
    <property type="reaction ID" value="UER00287"/>
</dbReference>
<dbReference type="Proteomes" id="UP000008205">
    <property type="component" value="Chromosome"/>
</dbReference>
<dbReference type="GO" id="GO:0008783">
    <property type="term" value="F:agmatinase activity"/>
    <property type="evidence" value="ECO:0007669"/>
    <property type="project" value="UniProtKB-UniRule"/>
</dbReference>
<dbReference type="GO" id="GO:0030145">
    <property type="term" value="F:manganese ion binding"/>
    <property type="evidence" value="ECO:0007669"/>
    <property type="project" value="InterPro"/>
</dbReference>
<dbReference type="GO" id="GO:0033389">
    <property type="term" value="P:putrescine biosynthetic process from arginine, via agmatine"/>
    <property type="evidence" value="ECO:0007669"/>
    <property type="project" value="TreeGrafter"/>
</dbReference>
<dbReference type="GO" id="GO:0008295">
    <property type="term" value="P:spermidine biosynthetic process"/>
    <property type="evidence" value="ECO:0007669"/>
    <property type="project" value="UniProtKB-UniRule"/>
</dbReference>
<dbReference type="CDD" id="cd11592">
    <property type="entry name" value="Agmatinase_PAH"/>
    <property type="match status" value="1"/>
</dbReference>
<dbReference type="FunFam" id="3.40.800.10:FF:000001">
    <property type="entry name" value="Agmatinase"/>
    <property type="match status" value="1"/>
</dbReference>
<dbReference type="Gene3D" id="3.40.800.10">
    <property type="entry name" value="Ureohydrolase domain"/>
    <property type="match status" value="1"/>
</dbReference>
<dbReference type="HAMAP" id="MF_01418">
    <property type="entry name" value="SpeB"/>
    <property type="match status" value="1"/>
</dbReference>
<dbReference type="InterPro" id="IPR023694">
    <property type="entry name" value="Agmatinase"/>
</dbReference>
<dbReference type="InterPro" id="IPR005925">
    <property type="entry name" value="Agmatinase-rel"/>
</dbReference>
<dbReference type="InterPro" id="IPR006035">
    <property type="entry name" value="Ureohydrolase"/>
</dbReference>
<dbReference type="InterPro" id="IPR023696">
    <property type="entry name" value="Ureohydrolase_dom_sf"/>
</dbReference>
<dbReference type="InterPro" id="IPR020855">
    <property type="entry name" value="Ureohydrolase_Mn_BS"/>
</dbReference>
<dbReference type="NCBIfam" id="TIGR01230">
    <property type="entry name" value="agmatinase"/>
    <property type="match status" value="1"/>
</dbReference>
<dbReference type="NCBIfam" id="NF002564">
    <property type="entry name" value="PRK02190.1"/>
    <property type="match status" value="1"/>
</dbReference>
<dbReference type="PANTHER" id="PTHR11358">
    <property type="entry name" value="ARGINASE/AGMATINASE"/>
    <property type="match status" value="1"/>
</dbReference>
<dbReference type="PANTHER" id="PTHR11358:SF26">
    <property type="entry name" value="GUANIDINO ACID HYDROLASE, MITOCHONDRIAL"/>
    <property type="match status" value="1"/>
</dbReference>
<dbReference type="Pfam" id="PF00491">
    <property type="entry name" value="Arginase"/>
    <property type="match status" value="1"/>
</dbReference>
<dbReference type="PIRSF" id="PIRSF036979">
    <property type="entry name" value="Arginase"/>
    <property type="match status" value="1"/>
</dbReference>
<dbReference type="SUPFAM" id="SSF52768">
    <property type="entry name" value="Arginase/deacetylase"/>
    <property type="match status" value="1"/>
</dbReference>
<dbReference type="PROSITE" id="PS01053">
    <property type="entry name" value="ARGINASE_1"/>
    <property type="match status" value="1"/>
</dbReference>
<dbReference type="PROSITE" id="PS51409">
    <property type="entry name" value="ARGINASE_2"/>
    <property type="match status" value="1"/>
</dbReference>
<reference key="1">
    <citation type="journal article" date="2009" name="J. Bacteriol.">
        <title>Complete genome sequence and comparative genome analysis of enteropathogenic Escherichia coli O127:H6 strain E2348/69.</title>
        <authorList>
            <person name="Iguchi A."/>
            <person name="Thomson N.R."/>
            <person name="Ogura Y."/>
            <person name="Saunders D."/>
            <person name="Ooka T."/>
            <person name="Henderson I.R."/>
            <person name="Harris D."/>
            <person name="Asadulghani M."/>
            <person name="Kurokawa K."/>
            <person name="Dean P."/>
            <person name="Kenny B."/>
            <person name="Quail M.A."/>
            <person name="Thurston S."/>
            <person name="Dougan G."/>
            <person name="Hayashi T."/>
            <person name="Parkhill J."/>
            <person name="Frankel G."/>
        </authorList>
    </citation>
    <scope>NUCLEOTIDE SEQUENCE [LARGE SCALE GENOMIC DNA]</scope>
    <source>
        <strain>E2348/69 / EPEC</strain>
    </source>
</reference>
<keyword id="KW-0378">Hydrolase</keyword>
<keyword id="KW-0464">Manganese</keyword>
<keyword id="KW-0479">Metal-binding</keyword>
<keyword id="KW-0620">Polyamine biosynthesis</keyword>
<keyword id="KW-0661">Putrescine biosynthesis</keyword>
<keyword id="KW-1185">Reference proteome</keyword>
<keyword id="KW-0745">Spermidine biosynthesis</keyword>
<comment type="function">
    <text evidence="1">Catalyzes the formation of putrescine from agmatine.</text>
</comment>
<comment type="catalytic activity">
    <reaction evidence="1">
        <text>agmatine + H2O = urea + putrescine</text>
        <dbReference type="Rhea" id="RHEA:13929"/>
        <dbReference type="ChEBI" id="CHEBI:15377"/>
        <dbReference type="ChEBI" id="CHEBI:16199"/>
        <dbReference type="ChEBI" id="CHEBI:58145"/>
        <dbReference type="ChEBI" id="CHEBI:326268"/>
        <dbReference type="EC" id="3.5.3.11"/>
    </reaction>
</comment>
<comment type="cofactor">
    <cofactor evidence="1">
        <name>Mn(2+)</name>
        <dbReference type="ChEBI" id="CHEBI:29035"/>
    </cofactor>
</comment>
<comment type="pathway">
    <text evidence="1">Amine and polyamine biosynthesis; putrescine biosynthesis via agmatine pathway; putrescine from agmatine: step 1/1.</text>
</comment>
<comment type="similarity">
    <text evidence="1">Belongs to the arginase family. Agmatinase subfamily.</text>
</comment>